<reference key="1">
    <citation type="journal article" date="2008" name="Nat. Biotechnol.">
        <title>Genome sequencing and analysis of the biomass-degrading fungus Trichoderma reesei (syn. Hypocrea jecorina).</title>
        <authorList>
            <person name="Martinez D."/>
            <person name="Berka R.M."/>
            <person name="Henrissat B."/>
            <person name="Saloheimo M."/>
            <person name="Arvas M."/>
            <person name="Baker S.E."/>
            <person name="Chapman J."/>
            <person name="Chertkov O."/>
            <person name="Coutinho P.M."/>
            <person name="Cullen D."/>
            <person name="Danchin E.G."/>
            <person name="Grigoriev I.V."/>
            <person name="Harris P."/>
            <person name="Jackson M."/>
            <person name="Kubicek C.P."/>
            <person name="Han C.S."/>
            <person name="Ho I."/>
            <person name="Larrondo L.F."/>
            <person name="de Leon A.L."/>
            <person name="Magnuson J.K."/>
            <person name="Merino S."/>
            <person name="Misra M."/>
            <person name="Nelson B."/>
            <person name="Putnam N."/>
            <person name="Robbertse B."/>
            <person name="Salamov A.A."/>
            <person name="Schmoll M."/>
            <person name="Terry A."/>
            <person name="Thayer N."/>
            <person name="Westerholm-Parvinen A."/>
            <person name="Schoch C.L."/>
            <person name="Yao J."/>
            <person name="Barabote R."/>
            <person name="Nelson M.A."/>
            <person name="Detter C."/>
            <person name="Bruce D."/>
            <person name="Kuske C.R."/>
            <person name="Xie G."/>
            <person name="Richardson P."/>
            <person name="Rokhsar D.S."/>
            <person name="Lucas S.M."/>
            <person name="Rubin E.M."/>
            <person name="Dunn-Coleman N."/>
            <person name="Ward M."/>
            <person name="Brettin T.S."/>
        </authorList>
    </citation>
    <scope>NUCLEOTIDE SEQUENCE [LARGE SCALE GENOMIC DNA]</scope>
    <source>
        <strain>QM6a</strain>
    </source>
</reference>
<reference key="2">
    <citation type="journal article" date="2012" name="J. Biol. Chem.">
        <title>L-xylo-3-hexulose reductase is the missing link in the oxidoreductive pathway for D-galactose catabolism in filamentous fungi.</title>
        <authorList>
            <person name="Mojzita D."/>
            <person name="Herold S."/>
            <person name="Metz B."/>
            <person name="Seiboth B."/>
            <person name="Richard P."/>
        </authorList>
    </citation>
    <scope>IDENTIFICATION</scope>
    <source>
        <strain>QM6a</strain>
    </source>
</reference>
<reference key="3">
    <citation type="journal article" date="2013" name="Biochemistry">
        <title>A novel L-xylulose reductase essential for L-arabinose catabolism in Trichoderma reesei.</title>
        <authorList>
            <person name="Metz B."/>
            <person name="Mojzita D."/>
            <person name="Herold S."/>
            <person name="Kubicek C.P."/>
            <person name="Richard P."/>
            <person name="Seiboth B."/>
        </authorList>
    </citation>
    <scope>INDUCTION</scope>
    <scope>DISRUPTION PHENOTYPE</scope>
    <scope>FUNCTION</scope>
    <scope>CATALYTIC ACTIVITY</scope>
    <scope>BIOPHYSICOCHEMICAL PROPERTIES</scope>
</reference>
<dbReference type="EC" id="1.1.1.10" evidence="4"/>
<dbReference type="EMBL" id="GL985062">
    <property type="protein sequence ID" value="EGR49477.1"/>
    <property type="molecule type" value="Genomic_DNA"/>
</dbReference>
<dbReference type="EMBL" id="BK008567">
    <property type="protein sequence ID" value="DAA35180.1"/>
    <property type="molecule type" value="Genomic_DNA"/>
</dbReference>
<dbReference type="RefSeq" id="XP_006964623.1">
    <property type="nucleotide sequence ID" value="XM_006964561.1"/>
</dbReference>
<dbReference type="SMR" id="G0RH19"/>
<dbReference type="STRING" id="431241.G0RH19"/>
<dbReference type="EnsemblFungi" id="EGR49477">
    <property type="protein sequence ID" value="EGR49477"/>
    <property type="gene ID" value="TRIREDRAFT_60033"/>
</dbReference>
<dbReference type="GeneID" id="18486563"/>
<dbReference type="KEGG" id="tre:TRIREDRAFT_60033"/>
<dbReference type="VEuPathDB" id="FungiDB:TRIREDRAFT_60033"/>
<dbReference type="eggNOG" id="KOG0725">
    <property type="taxonomic scope" value="Eukaryota"/>
</dbReference>
<dbReference type="HOGENOM" id="CLU_010194_1_1_1"/>
<dbReference type="OrthoDB" id="1888931at2759"/>
<dbReference type="BioCyc" id="MetaCyc:MONOMER-18763"/>
<dbReference type="SABIO-RK" id="G0RH19"/>
<dbReference type="UniPathway" id="UPA00146">
    <property type="reaction ID" value="UER00576"/>
</dbReference>
<dbReference type="Proteomes" id="UP000008984">
    <property type="component" value="Unassembled WGS sequence"/>
</dbReference>
<dbReference type="GO" id="GO:0050038">
    <property type="term" value="F:L-xylulose reductase (NADPH) activity"/>
    <property type="evidence" value="ECO:0007669"/>
    <property type="project" value="UniProtKB-EC"/>
</dbReference>
<dbReference type="GO" id="GO:0050664">
    <property type="term" value="F:oxidoreductase activity, acting on NAD(P)H, oxygen as acceptor"/>
    <property type="evidence" value="ECO:0007669"/>
    <property type="project" value="TreeGrafter"/>
</dbReference>
<dbReference type="GO" id="GO:0019569">
    <property type="term" value="P:L-arabinose catabolic process to xylulose 5-phosphate"/>
    <property type="evidence" value="ECO:0007669"/>
    <property type="project" value="UniProtKB-UniPathway"/>
</dbReference>
<dbReference type="FunFam" id="3.40.50.720:FF:000090">
    <property type="entry name" value="NADP-dependent mannitol dehydrogenase"/>
    <property type="match status" value="1"/>
</dbReference>
<dbReference type="Gene3D" id="3.40.50.720">
    <property type="entry name" value="NAD(P)-binding Rossmann-like Domain"/>
    <property type="match status" value="1"/>
</dbReference>
<dbReference type="InterPro" id="IPR036291">
    <property type="entry name" value="NAD(P)-bd_dom_sf"/>
</dbReference>
<dbReference type="InterPro" id="IPR020904">
    <property type="entry name" value="Sc_DH/Rdtase_CS"/>
</dbReference>
<dbReference type="InterPro" id="IPR002347">
    <property type="entry name" value="SDR_fam"/>
</dbReference>
<dbReference type="PANTHER" id="PTHR43008">
    <property type="entry name" value="BENZIL REDUCTASE"/>
    <property type="match status" value="1"/>
</dbReference>
<dbReference type="PANTHER" id="PTHR43008:SF13">
    <property type="entry name" value="L-XYLULOSE REDUCTASE-RELATED"/>
    <property type="match status" value="1"/>
</dbReference>
<dbReference type="Pfam" id="PF13561">
    <property type="entry name" value="adh_short_C2"/>
    <property type="match status" value="1"/>
</dbReference>
<dbReference type="PRINTS" id="PR00081">
    <property type="entry name" value="GDHRDH"/>
</dbReference>
<dbReference type="PRINTS" id="PR00080">
    <property type="entry name" value="SDRFAMILY"/>
</dbReference>
<dbReference type="SUPFAM" id="SSF51735">
    <property type="entry name" value="NAD(P)-binding Rossmann-fold domains"/>
    <property type="match status" value="1"/>
</dbReference>
<dbReference type="PROSITE" id="PS00061">
    <property type="entry name" value="ADH_SHORT"/>
    <property type="match status" value="1"/>
</dbReference>
<keyword id="KW-0054">Arabinose catabolism</keyword>
<keyword id="KW-0119">Carbohydrate metabolism</keyword>
<keyword id="KW-0521">NADP</keyword>
<keyword id="KW-0560">Oxidoreductase</keyword>
<keyword id="KW-1185">Reference proteome</keyword>
<proteinExistence type="evidence at protein level"/>
<evidence type="ECO:0000250" key="1">
    <source>
        <dbReference type="UniProtKB" id="L0E2Z4"/>
    </source>
</evidence>
<evidence type="ECO:0000250" key="2">
    <source>
        <dbReference type="UniProtKB" id="O93868"/>
    </source>
</evidence>
<evidence type="ECO:0000255" key="3">
    <source>
        <dbReference type="PROSITE-ProRule" id="PRU10001"/>
    </source>
</evidence>
<evidence type="ECO:0000269" key="4">
    <source>
    </source>
</evidence>
<evidence type="ECO:0000303" key="5">
    <source>
    </source>
</evidence>
<evidence type="ECO:0000305" key="6"/>
<sequence>MKNGAFPHDNAAVPNVERVLPLFSLKGRTAIVSGAGAGIGLAVAQAFAEAGANVAIWYNSNKQAVTSAEDIAKTYGVKCKAYQVNVTSAEAVDKAITEIIKEFNGRLDVFVANSGITWTEGAFIDGSVESARNVMSVNVDGVMWCAKSAGAHFRRQKEEGTTIDGKPLDNFIAGSFIATASMSGSIVNVPQLQAVYNSSKAAVIHFCKSLAVEWTGFARVNTVSPGYIITEISNFVPPETKTLWKDKIVMGREGRVGELKGAYLYLASDASSYTTGLDMIVDGGYSLP</sequence>
<protein>
    <recommendedName>
        <fullName evidence="5">L-xylulose reductase</fullName>
        <ecNumber evidence="4">1.1.1.10</ecNumber>
    </recommendedName>
</protein>
<comment type="function">
    <text evidence="4">L-xylulose reductase involved in the catabolism of L-arabinose through an oxidoreductive pathway. Catalyzes the NADPH-dependent reduction of L-xylulose. Is also able to convert D-xylulose, D-ribulose, L-sorbose, and D-fructose to their corresponding polyols.</text>
</comment>
<comment type="catalytic activity">
    <reaction evidence="4">
        <text>xylitol + NADP(+) = L-xylulose + NADPH + H(+)</text>
        <dbReference type="Rhea" id="RHEA:17025"/>
        <dbReference type="ChEBI" id="CHEBI:15378"/>
        <dbReference type="ChEBI" id="CHEBI:17151"/>
        <dbReference type="ChEBI" id="CHEBI:17399"/>
        <dbReference type="ChEBI" id="CHEBI:57783"/>
        <dbReference type="ChEBI" id="CHEBI:58349"/>
        <dbReference type="EC" id="1.1.1.10"/>
    </reaction>
</comment>
<comment type="biophysicochemical properties">
    <kinetics>
        <KM evidence="4">16 mM for L-xylulose</KM>
        <KM evidence="4">0.13 mM for NADPH</KM>
        <KM evidence="4">105 mM for D-ribulose</KM>
        <KM evidence="4">250 mM for D-sorbitol</KM>
        <KM evidence="4">100 mM for xylitol</KM>
        <Vmax evidence="4">367.0 nmol/sec/mg enzyme towards L-xylulose</Vmax>
        <Vmax evidence="4">250.0 nmol/sec/mg enzyme towards NADPH</Vmax>
        <Vmax evidence="4">266.0 nmol/sec/mg enzyme towards D-ribulose</Vmax>
        <Vmax evidence="4">250.0 nmol/sec/mg enzyme towards D-sorbitol</Vmax>
        <Vmax evidence="4">100.0 nmol/sec/mg enzyme towards xylitol</Vmax>
    </kinetics>
</comment>
<comment type="pathway">
    <text evidence="6">Carbohydrate degradation; L-arabinose degradation via L-arabinitol; D-xylulose 5-phosphate from L-arabinose (fungal route): step 3/5.</text>
</comment>
<comment type="induction">
    <text evidence="4">Transcription is repressed by D-glucose and induced by L-arabinose and L-arabitol.</text>
</comment>
<comment type="disruption phenotype">
    <text evidence="4">Decreases strongly levels of growth on solid medium and biomass accumulation during liquid cultivation for both L-arabinose and L-arabitol; and impairs L-xylulose reductase activity.</text>
</comment>
<comment type="similarity">
    <text evidence="6">Belongs to the short-chain dehydrogenases/reductases (SDR) family.</text>
</comment>
<feature type="chain" id="PRO_0000433646" description="L-xylulose reductase">
    <location>
        <begin position="1"/>
        <end position="288"/>
    </location>
</feature>
<feature type="active site" description="Proton donor" evidence="2">
    <location>
        <position position="181"/>
    </location>
</feature>
<feature type="active site" description="Proton acceptor" evidence="3">
    <location>
        <position position="196"/>
    </location>
</feature>
<feature type="active site" description="Lowers pKa of active site Tyr" evidence="2">
    <location>
        <position position="200"/>
    </location>
</feature>
<feature type="binding site" evidence="1">
    <location>
        <position position="39"/>
    </location>
    <ligand>
        <name>NADP(+)</name>
        <dbReference type="ChEBI" id="CHEBI:58349"/>
    </ligand>
</feature>
<feature type="binding site" evidence="2">
    <location>
        <position position="113"/>
    </location>
    <ligand>
        <name>NADP(+)</name>
        <dbReference type="ChEBI" id="CHEBI:58349"/>
    </ligand>
</feature>
<feature type="binding site" evidence="1">
    <location>
        <position position="147"/>
    </location>
    <ligand>
        <name>NADP(+)</name>
        <dbReference type="ChEBI" id="CHEBI:58349"/>
    </ligand>
</feature>
<feature type="binding site" evidence="2">
    <location>
        <position position="196"/>
    </location>
    <ligand>
        <name>NADP(+)</name>
        <dbReference type="ChEBI" id="CHEBI:58349"/>
    </ligand>
</feature>
<feature type="binding site" evidence="2">
    <location>
        <position position="200"/>
    </location>
    <ligand>
        <name>NADP(+)</name>
        <dbReference type="ChEBI" id="CHEBI:58349"/>
    </ligand>
</feature>
<feature type="binding site" evidence="2">
    <location>
        <position position="228"/>
    </location>
    <ligand>
        <name>NADP(+)</name>
        <dbReference type="ChEBI" id="CHEBI:58349"/>
    </ligand>
</feature>
<feature type="binding site" evidence="1">
    <location>
        <position position="230"/>
    </location>
    <ligand>
        <name>NADP(+)</name>
        <dbReference type="ChEBI" id="CHEBI:58349"/>
    </ligand>
</feature>
<accession>G0RH19</accession>
<gene>
    <name evidence="5" type="primary">lxr3</name>
    <name type="ORF">TRIREDRAFT_60033</name>
</gene>
<organism>
    <name type="scientific">Hypocrea jecorina (strain QM6a)</name>
    <name type="common">Trichoderma reesei</name>
    <dbReference type="NCBI Taxonomy" id="431241"/>
    <lineage>
        <taxon>Eukaryota</taxon>
        <taxon>Fungi</taxon>
        <taxon>Dikarya</taxon>
        <taxon>Ascomycota</taxon>
        <taxon>Pezizomycotina</taxon>
        <taxon>Sordariomycetes</taxon>
        <taxon>Hypocreomycetidae</taxon>
        <taxon>Hypocreales</taxon>
        <taxon>Hypocreaceae</taxon>
        <taxon>Trichoderma</taxon>
    </lineage>
</organism>
<name>LXR3_HYPJQ</name>